<reference key="1">
    <citation type="submission" date="2009-07" db="EMBL/GenBank/DDBJ databases">
        <title>Complete sequence of Pectobacterium carotovorum subsp. carotovorum PC1.</title>
        <authorList>
            <consortium name="US DOE Joint Genome Institute"/>
            <person name="Lucas S."/>
            <person name="Copeland A."/>
            <person name="Lapidus A."/>
            <person name="Glavina del Rio T."/>
            <person name="Tice H."/>
            <person name="Bruce D."/>
            <person name="Goodwin L."/>
            <person name="Pitluck S."/>
            <person name="Munk A.C."/>
            <person name="Brettin T."/>
            <person name="Detter J.C."/>
            <person name="Han C."/>
            <person name="Tapia R."/>
            <person name="Larimer F."/>
            <person name="Land M."/>
            <person name="Hauser L."/>
            <person name="Kyrpides N."/>
            <person name="Mikhailova N."/>
            <person name="Balakrishnan V."/>
            <person name="Glasner J."/>
            <person name="Perna N.T."/>
        </authorList>
    </citation>
    <scope>NUCLEOTIDE SEQUENCE [LARGE SCALE GENOMIC DNA]</scope>
    <source>
        <strain>PC1</strain>
    </source>
</reference>
<name>PPTA_PECCP</name>
<keyword id="KW-0963">Cytoplasm</keyword>
<keyword id="KW-0413">Isomerase</keyword>
<evidence type="ECO:0000255" key="1">
    <source>
        <dbReference type="HAMAP-Rule" id="MF_00718"/>
    </source>
</evidence>
<dbReference type="EC" id="5.3.2.-" evidence="1"/>
<dbReference type="EMBL" id="CP001657">
    <property type="protein sequence ID" value="ACT13098.1"/>
    <property type="molecule type" value="Genomic_DNA"/>
</dbReference>
<dbReference type="RefSeq" id="WP_015840291.1">
    <property type="nucleotide sequence ID" value="NC_012917.1"/>
</dbReference>
<dbReference type="SMR" id="C6DH49"/>
<dbReference type="STRING" id="561230.PC1_2057"/>
<dbReference type="GeneID" id="67794062"/>
<dbReference type="KEGG" id="pct:PC1_2057"/>
<dbReference type="eggNOG" id="COG1942">
    <property type="taxonomic scope" value="Bacteria"/>
</dbReference>
<dbReference type="HOGENOM" id="CLU_183611_0_1_6"/>
<dbReference type="OrthoDB" id="3395834at2"/>
<dbReference type="Proteomes" id="UP000002736">
    <property type="component" value="Chromosome"/>
</dbReference>
<dbReference type="GO" id="GO:0005737">
    <property type="term" value="C:cytoplasm"/>
    <property type="evidence" value="ECO:0007669"/>
    <property type="project" value="UniProtKB-SubCell"/>
</dbReference>
<dbReference type="GO" id="GO:0016862">
    <property type="term" value="F:intramolecular oxidoreductase activity, interconverting keto- and enol-groups"/>
    <property type="evidence" value="ECO:0007669"/>
    <property type="project" value="UniProtKB-UniRule"/>
</dbReference>
<dbReference type="Gene3D" id="3.30.429.10">
    <property type="entry name" value="Macrophage Migration Inhibitory Factor"/>
    <property type="match status" value="1"/>
</dbReference>
<dbReference type="HAMAP" id="MF_00718">
    <property type="entry name" value="Tautomerase_PptA"/>
    <property type="match status" value="1"/>
</dbReference>
<dbReference type="InterPro" id="IPR004370">
    <property type="entry name" value="4-OT-like_dom"/>
</dbReference>
<dbReference type="InterPro" id="IPR014347">
    <property type="entry name" value="Tautomerase/MIF_sf"/>
</dbReference>
<dbReference type="InterPro" id="IPR017284">
    <property type="entry name" value="Tautomerase_PptA"/>
</dbReference>
<dbReference type="NCBIfam" id="NF002324">
    <property type="entry name" value="PRK01271.1"/>
    <property type="match status" value="1"/>
</dbReference>
<dbReference type="Pfam" id="PF01361">
    <property type="entry name" value="Tautomerase"/>
    <property type="match status" value="1"/>
</dbReference>
<dbReference type="PIRSF" id="PIRSF037799">
    <property type="entry name" value="Tautomer_YdcE_prd"/>
    <property type="match status" value="1"/>
</dbReference>
<dbReference type="SUPFAM" id="SSF55331">
    <property type="entry name" value="Tautomerase/MIF"/>
    <property type="match status" value="1"/>
</dbReference>
<gene>
    <name evidence="1" type="primary">pptA</name>
    <name type="ordered locus">PC1_2057</name>
</gene>
<protein>
    <recommendedName>
        <fullName evidence="1">Tautomerase PptA</fullName>
        <ecNumber evidence="1">5.3.2.-</ecNumber>
    </recommendedName>
</protein>
<accession>C6DH49</accession>
<comment type="subunit">
    <text evidence="1">Homodimer.</text>
</comment>
<comment type="subcellular location">
    <subcellularLocation>
        <location evidence="1">Cytoplasm</location>
    </subcellularLocation>
</comment>
<comment type="similarity">
    <text evidence="1">Belongs to the 4-oxalocrotonate tautomerase family. PptA subfamily.</text>
</comment>
<sequence>MPHIDVKHFPRNLSEEEKKVIAEDLAAVLKKHFGSSDDSLSVAFNEIQPDRWKDEVYDPIIKPHLDTLAKKPGYSY</sequence>
<proteinExistence type="inferred from homology"/>
<organism>
    <name type="scientific">Pectobacterium carotovorum subsp. carotovorum (strain PC1)</name>
    <dbReference type="NCBI Taxonomy" id="561230"/>
    <lineage>
        <taxon>Bacteria</taxon>
        <taxon>Pseudomonadati</taxon>
        <taxon>Pseudomonadota</taxon>
        <taxon>Gammaproteobacteria</taxon>
        <taxon>Enterobacterales</taxon>
        <taxon>Pectobacteriaceae</taxon>
        <taxon>Pectobacterium</taxon>
    </lineage>
</organism>
<feature type="initiator methionine" description="Removed" evidence="1">
    <location>
        <position position="1"/>
    </location>
</feature>
<feature type="chain" id="PRO_1000212686" description="Tautomerase PptA">
    <location>
        <begin position="2"/>
        <end position="76"/>
    </location>
</feature>
<feature type="active site" description="Proton acceptor; via imino nitrogen" evidence="1">
    <location>
        <position position="2"/>
    </location>
</feature>